<reference key="1">
    <citation type="journal article" date="2007" name="Proc. Natl. Acad. Sci. U.S.A.">
        <title>Genome and proteome of long-chain alkane degrading Geobacillus thermodenitrificans NG80-2 isolated from a deep-subsurface oil reservoir.</title>
        <authorList>
            <person name="Feng L."/>
            <person name="Wang W."/>
            <person name="Cheng J."/>
            <person name="Ren Y."/>
            <person name="Zhao G."/>
            <person name="Gao C."/>
            <person name="Tang Y."/>
            <person name="Liu X."/>
            <person name="Han W."/>
            <person name="Peng X."/>
            <person name="Liu R."/>
            <person name="Wang L."/>
        </authorList>
    </citation>
    <scope>NUCLEOTIDE SEQUENCE [LARGE SCALE GENOMIC DNA]</scope>
    <source>
        <strain>NG80-2</strain>
    </source>
</reference>
<comment type="similarity">
    <text evidence="1">Belongs to the eukaryotic ribosomal protein eL8 family.</text>
</comment>
<accession>A4IJI3</accession>
<feature type="chain" id="PRO_1000025042" description="RNA-binding protein GTNG_0100">
    <location>
        <begin position="1"/>
        <end position="82"/>
    </location>
</feature>
<evidence type="ECO:0000255" key="1">
    <source>
        <dbReference type="HAMAP-Rule" id="MF_00574"/>
    </source>
</evidence>
<evidence type="ECO:0000305" key="2"/>
<keyword id="KW-0694">RNA-binding</keyword>
<organism>
    <name type="scientific">Geobacillus thermodenitrificans (strain NG80-2)</name>
    <dbReference type="NCBI Taxonomy" id="420246"/>
    <lineage>
        <taxon>Bacteria</taxon>
        <taxon>Bacillati</taxon>
        <taxon>Bacillota</taxon>
        <taxon>Bacilli</taxon>
        <taxon>Bacillales</taxon>
        <taxon>Anoxybacillaceae</taxon>
        <taxon>Geobacillus</taxon>
    </lineage>
</organism>
<sequence length="82" mass="8632">MSYEKVLQAGKIVIGTKQTIRALKEGKAAEVIVAEDADLPIIEKVMAAANEANVPITKVDSMKKLGKACKIQVGAAAVAILR</sequence>
<name>RXL7_GEOTN</name>
<protein>
    <recommendedName>
        <fullName evidence="1">RNA-binding protein GTNG_0100</fullName>
    </recommendedName>
    <alternativeName>
        <fullName evidence="2">Putative ribosomal protein L7Ae-like</fullName>
    </alternativeName>
    <alternativeName>
        <fullName evidence="1">Ribosomal protein eL8-like</fullName>
    </alternativeName>
</protein>
<gene>
    <name type="ordered locus">GTNG_0100</name>
</gene>
<proteinExistence type="inferred from homology"/>
<dbReference type="EMBL" id="CP000557">
    <property type="protein sequence ID" value="ABO65487.1"/>
    <property type="molecule type" value="Genomic_DNA"/>
</dbReference>
<dbReference type="RefSeq" id="WP_008881950.1">
    <property type="nucleotide sequence ID" value="NC_009328.1"/>
</dbReference>
<dbReference type="SMR" id="A4IJI3"/>
<dbReference type="GeneID" id="87622332"/>
<dbReference type="KEGG" id="gtn:GTNG_0100"/>
<dbReference type="eggNOG" id="COG1358">
    <property type="taxonomic scope" value="Bacteria"/>
</dbReference>
<dbReference type="HOGENOM" id="CLU_168063_0_0_9"/>
<dbReference type="Proteomes" id="UP000001578">
    <property type="component" value="Chromosome"/>
</dbReference>
<dbReference type="GO" id="GO:0003723">
    <property type="term" value="F:RNA binding"/>
    <property type="evidence" value="ECO:0007669"/>
    <property type="project" value="UniProtKB-UniRule"/>
</dbReference>
<dbReference type="Gene3D" id="3.30.1330.30">
    <property type="match status" value="1"/>
</dbReference>
<dbReference type="HAMAP" id="MF_00574">
    <property type="entry name" value="Ribosomal_eL8_Bact"/>
    <property type="match status" value="1"/>
</dbReference>
<dbReference type="InterPro" id="IPR029064">
    <property type="entry name" value="Ribosomal_eL30-like_sf"/>
</dbReference>
<dbReference type="InterPro" id="IPR004038">
    <property type="entry name" value="Ribosomal_eL8/eL30/eS12/Gad45"/>
</dbReference>
<dbReference type="InterPro" id="IPR023460">
    <property type="entry name" value="RNA_bf_YbxF-like"/>
</dbReference>
<dbReference type="NCBIfam" id="NF010125">
    <property type="entry name" value="PRK13602.1"/>
    <property type="match status" value="1"/>
</dbReference>
<dbReference type="Pfam" id="PF01248">
    <property type="entry name" value="Ribosomal_L7Ae"/>
    <property type="match status" value="1"/>
</dbReference>
<dbReference type="SUPFAM" id="SSF55315">
    <property type="entry name" value="L30e-like"/>
    <property type="match status" value="1"/>
</dbReference>